<feature type="chain" id="PRO_0000124654" description="3-alpha-hydroxysteroid dehydrogenase">
    <location>
        <begin position="1"/>
        <end position="322"/>
    </location>
</feature>
<feature type="active site" description="Proton donor">
    <location>
        <position position="55"/>
    </location>
</feature>
<feature type="binding site" evidence="3">
    <location>
        <begin position="20"/>
        <end position="24"/>
    </location>
    <ligand>
        <name>NADP(+)</name>
        <dbReference type="ChEBI" id="CHEBI:58349"/>
    </ligand>
</feature>
<feature type="binding site" evidence="3">
    <location>
        <position position="50"/>
    </location>
    <ligand>
        <name>NADP(+)</name>
        <dbReference type="ChEBI" id="CHEBI:58349"/>
    </ligand>
</feature>
<feature type="binding site">
    <location>
        <position position="117"/>
    </location>
    <ligand>
        <name>substrate</name>
    </ligand>
</feature>
<feature type="binding site" evidence="3">
    <location>
        <begin position="166"/>
        <end position="167"/>
    </location>
    <ligand>
        <name>NADP(+)</name>
        <dbReference type="ChEBI" id="CHEBI:58349"/>
    </ligand>
</feature>
<feature type="binding site" evidence="3">
    <location>
        <position position="190"/>
    </location>
    <ligand>
        <name>NADP(+)</name>
        <dbReference type="ChEBI" id="CHEBI:58349"/>
    </ligand>
</feature>
<feature type="binding site" evidence="3">
    <location>
        <begin position="216"/>
        <end position="221"/>
    </location>
    <ligand>
        <name>NADP(+)</name>
        <dbReference type="ChEBI" id="CHEBI:58349"/>
    </ligand>
</feature>
<feature type="binding site">
    <location>
        <position position="227"/>
    </location>
    <ligand>
        <name>substrate</name>
    </ligand>
</feature>
<feature type="binding site" evidence="3">
    <location>
        <begin position="270"/>
        <end position="280"/>
    </location>
    <ligand>
        <name>NADP(+)</name>
        <dbReference type="ChEBI" id="CHEBI:58349"/>
    </ligand>
</feature>
<feature type="site" description="Lowers pKa of active site Tyr" evidence="1">
    <location>
        <position position="84"/>
    </location>
</feature>
<feature type="modified residue" description="Blocked amino end (Met)">
    <location>
        <position position="1"/>
    </location>
</feature>
<feature type="sequence conflict" description="In Ref. 3; AAB19918." evidence="4" ref="3">
    <original>L</original>
    <variation>Q</variation>
    <location>
        <position position="108"/>
    </location>
</feature>
<feature type="sequence conflict" description="In Ref. 3; AAB19918." evidence="4" ref="3">
    <original>NA</original>
    <variation>KP</variation>
    <location>
        <begin position="273"/>
        <end position="274"/>
    </location>
</feature>
<feature type="sequence conflict" description="In Ref. 3; AAB19918." evidence="4" ref="3">
    <original>L</original>
    <variation>P</variation>
    <location>
        <position position="280"/>
    </location>
</feature>
<feature type="helix" evidence="5">
    <location>
        <begin position="3"/>
        <end position="5"/>
    </location>
</feature>
<feature type="strand" evidence="5">
    <location>
        <begin position="7"/>
        <end position="9"/>
    </location>
</feature>
<feature type="turn" evidence="6">
    <location>
        <begin position="11"/>
        <end position="13"/>
    </location>
</feature>
<feature type="strand" evidence="5">
    <location>
        <begin position="15"/>
        <end position="22"/>
    </location>
</feature>
<feature type="turn" evidence="6">
    <location>
        <begin position="28"/>
        <end position="30"/>
    </location>
</feature>
<feature type="helix" evidence="5">
    <location>
        <begin position="33"/>
        <end position="43"/>
    </location>
</feature>
<feature type="strand" evidence="5">
    <location>
        <begin position="48"/>
        <end position="50"/>
    </location>
</feature>
<feature type="turn" evidence="5">
    <location>
        <begin position="53"/>
        <end position="56"/>
    </location>
</feature>
<feature type="helix" evidence="5">
    <location>
        <begin position="58"/>
        <end position="70"/>
    </location>
</feature>
<feature type="helix" evidence="5">
    <location>
        <begin position="76"/>
        <end position="78"/>
    </location>
</feature>
<feature type="strand" evidence="5">
    <location>
        <begin position="80"/>
        <end position="85"/>
    </location>
</feature>
<feature type="helix" evidence="5">
    <location>
        <begin position="87"/>
        <end position="89"/>
    </location>
</feature>
<feature type="helix" evidence="5">
    <location>
        <begin position="92"/>
        <end position="94"/>
    </location>
</feature>
<feature type="helix" evidence="5">
    <location>
        <begin position="95"/>
        <end position="106"/>
    </location>
</feature>
<feature type="strand" evidence="5">
    <location>
        <begin position="109"/>
        <end position="117"/>
    </location>
</feature>
<feature type="strand" evidence="5">
    <location>
        <begin position="124"/>
        <end position="129"/>
    </location>
</feature>
<feature type="strand" evidence="6">
    <location>
        <begin position="131"/>
        <end position="137"/>
    </location>
</feature>
<feature type="helix" evidence="5">
    <location>
        <begin position="144"/>
        <end position="156"/>
    </location>
</feature>
<feature type="strand" evidence="5">
    <location>
        <begin position="159"/>
        <end position="167"/>
    </location>
</feature>
<feature type="helix" evidence="5">
    <location>
        <begin position="170"/>
        <end position="177"/>
    </location>
</feature>
<feature type="strand" evidence="5">
    <location>
        <begin position="187"/>
        <end position="192"/>
    </location>
</feature>
<feature type="helix" evidence="5">
    <location>
        <begin position="200"/>
        <end position="209"/>
    </location>
</feature>
<feature type="strand" evidence="5">
    <location>
        <begin position="212"/>
        <end position="217"/>
    </location>
</feature>
<feature type="turn" evidence="5">
    <location>
        <begin position="225"/>
        <end position="227"/>
    </location>
</feature>
<feature type="helix" evidence="5">
    <location>
        <begin position="235"/>
        <end position="237"/>
    </location>
</feature>
<feature type="helix" evidence="5">
    <location>
        <begin position="239"/>
        <end position="247"/>
    </location>
</feature>
<feature type="helix" evidence="5">
    <location>
        <begin position="252"/>
        <end position="262"/>
    </location>
</feature>
<feature type="strand" evidence="5">
    <location>
        <begin position="266"/>
        <end position="269"/>
    </location>
</feature>
<feature type="helix" evidence="5">
    <location>
        <begin position="274"/>
        <end position="280"/>
    </location>
</feature>
<feature type="turn" evidence="5">
    <location>
        <begin position="281"/>
        <end position="284"/>
    </location>
</feature>
<feature type="helix" evidence="5">
    <location>
        <begin position="290"/>
        <end position="297"/>
    </location>
</feature>
<feature type="helix" evidence="5">
    <location>
        <begin position="309"/>
        <end position="311"/>
    </location>
</feature>
<accession>P23457</accession>
<accession>Q5BKC8</accession>
<accession>Q6LDE6</accession>
<accession>Q6LDE7</accession>
<gene>
    <name type="primary">Akr1c9</name>
</gene>
<protein>
    <recommendedName>
        <fullName>3-alpha-hydroxysteroid dehydrogenase</fullName>
        <shortName>3-alpha-HSD</shortName>
        <ecNumber>1.1.1.50</ecNumber>
    </recommendedName>
    <alternativeName>
        <fullName>Hydroxyprostaglandin dehydrogenase</fullName>
    </alternativeName>
</protein>
<name>DIDH_RAT</name>
<comment type="function">
    <text>Besides being a 3-alpha-hydroxysteroid dehydrogenase, the enzyme can accomplish diverse functions: as quinone reductase, as an aromatic alcohol dehydrogenase, as dihydrodiol dehydrogenase, and as 9-, 11-, and 15-hydroxyprostaglandin dehydrogenase.</text>
</comment>
<comment type="catalytic activity">
    <reaction>
        <text>a 3alpha-hydroxysteroid + NADP(+) = a 3-oxosteroid + NADPH + H(+)</text>
        <dbReference type="Rhea" id="RHEA:34783"/>
        <dbReference type="ChEBI" id="CHEBI:15378"/>
        <dbReference type="ChEBI" id="CHEBI:36835"/>
        <dbReference type="ChEBI" id="CHEBI:47788"/>
        <dbReference type="ChEBI" id="CHEBI:57783"/>
        <dbReference type="ChEBI" id="CHEBI:58349"/>
        <dbReference type="EC" id="1.1.1.50"/>
    </reaction>
</comment>
<comment type="catalytic activity">
    <reaction>
        <text>a 3alpha-hydroxysteroid + NAD(+) = a 3-oxosteroid + NADH + H(+)</text>
        <dbReference type="Rhea" id="RHEA:34779"/>
        <dbReference type="ChEBI" id="CHEBI:15378"/>
        <dbReference type="ChEBI" id="CHEBI:36835"/>
        <dbReference type="ChEBI" id="CHEBI:47788"/>
        <dbReference type="ChEBI" id="CHEBI:57540"/>
        <dbReference type="ChEBI" id="CHEBI:57945"/>
        <dbReference type="EC" id="1.1.1.50"/>
    </reaction>
</comment>
<comment type="activity regulation">
    <text>Potently inhibited by the nonsteroidal anti-inflammatory drugs (NSAID).</text>
</comment>
<comment type="subunit">
    <text evidence="3">Monomer.</text>
</comment>
<comment type="subcellular location">
    <subcellularLocation>
        <location>Cytoplasm</location>
    </subcellularLocation>
</comment>
<comment type="tissue specificity">
    <text evidence="2">In brain, highest levels found in olfactory bulb. Moderate levels present in cerebellum, cerebral cortex, hypothalamus and pituitary. Low levels present in amygdala, brain stem, caudate putamen, cingulate cortex, hippocampus, midbrain, and thalamus.</text>
</comment>
<comment type="similarity">
    <text evidence="4">Belongs to the aldo/keto reductase family.</text>
</comment>
<reference key="1">
    <citation type="journal article" date="1991" name="J. Biol. Chem.">
        <title>Cloning and sequencing of the cDNA for rat liver 3 alpha-hydroxysteroid/dihydrodiol dehydrogenase.</title>
        <authorList>
            <person name="Pawlowski J.E."/>
            <person name="Huizinga M."/>
            <person name="Penning T.M."/>
        </authorList>
    </citation>
    <scope>NUCLEOTIDE SEQUENCE [MRNA]</scope>
    <scope>PARTIAL PROTEIN SEQUENCE</scope>
    <source>
        <tissue>Liver</tissue>
    </source>
</reference>
<reference key="2">
    <citation type="journal article" date="1991" name="J. Biol. Chem.">
        <title>Molecular structure of rat hepatic 3 alpha-hydroxysteroid dehydrogenase. A member of the oxidoreductase gene family.</title>
        <authorList>
            <person name="Stolz A."/>
            <person name="Rahimi-Kiani M."/>
            <person name="Ameis D."/>
            <person name="Chan E."/>
            <person name="Ronk M."/>
            <person name="Shively J.E."/>
        </authorList>
    </citation>
    <scope>NUCLEOTIDE SEQUENCE [MRNA]</scope>
    <scope>PARTIAL PROTEIN SEQUENCE</scope>
    <source>
        <tissue>Liver</tissue>
    </source>
</reference>
<reference key="3">
    <citation type="journal article" date="1991" name="Mol. Endocrinol.">
        <title>Molecular cloning and expression of rat liver 3 alpha-hydroxysteroid dehydrogenase.</title>
        <authorList>
            <person name="Cheng K.-C."/>
            <person name="White P.C."/>
            <person name="Qin K.-N."/>
        </authorList>
    </citation>
    <scope>NUCLEOTIDE SEQUENCE [MRNA]</scope>
    <source>
        <tissue>Liver</tissue>
    </source>
</reference>
<reference key="4">
    <citation type="journal article" date="1994" name="J. Biochem.">
        <title>Rat hepatic 3 alpha-hydroxysteroid dehydrogenase: expression of cDNA and physiological function in bile acid biosynthetic pathway.</title>
        <authorList>
            <person name="Usui E."/>
            <person name="Okuda K."/>
            <person name="Kato Y."/>
            <person name="Noshiro M."/>
        </authorList>
    </citation>
    <scope>NUCLEOTIDE SEQUENCE [MRNA]</scope>
</reference>
<reference key="5">
    <citation type="journal article" date="1999" name="J. Steroid Biochem. Mol. Biol.">
        <title>Genomic structure of rat 3alpha-hydroxysteroid/dihydrodiol dehydrogenase (3alpha-HSD/DD, AKR1C9).</title>
        <authorList>
            <person name="Lin H.K."/>
            <person name="Hung C.F."/>
            <person name="Moore M."/>
            <person name="Penning T.M."/>
        </authorList>
    </citation>
    <scope>NUCLEOTIDE SEQUENCE [GENOMIC DNA]</scope>
    <source>
        <strain>Sprague-Dawley</strain>
    </source>
</reference>
<reference key="6">
    <citation type="journal article" date="2004" name="Genome Res.">
        <title>The status, quality, and expansion of the NIH full-length cDNA project: the Mammalian Gene Collection (MGC).</title>
        <authorList>
            <consortium name="The MGC Project Team"/>
        </authorList>
    </citation>
    <scope>NUCLEOTIDE SEQUENCE [LARGE SCALE MRNA]</scope>
    <source>
        <tissue>Liver</tissue>
    </source>
</reference>
<reference key="7">
    <citation type="journal article" date="1994" name="Biochem. J.">
        <title>Purification of NADPH-dependent dehydroascorbate reductase from rat liver and its identification with 3 alpha-hydroxysteroid dehydrogenase.</title>
        <authorList>
            <person name="Del Bello B."/>
            <person name="Maellaro E."/>
            <person name="Sugherini L."/>
            <person name="Santucci A."/>
            <person name="Comporti M."/>
            <person name="Casini A.F."/>
        </authorList>
    </citation>
    <scope>PROTEIN SEQUENCE OF 2-16; 121-135; 152-166 AND 203-217</scope>
    <source>
        <tissue>Liver</tissue>
    </source>
</reference>
<reference key="8">
    <citation type="journal article" date="1991" name="Agents Actions">
        <title>Isolation and partial characterization of a full-length cDNA clone for 3 alpha-hydroxysteroid dehydrogenase: a potential target enzyme for nonsteroidal anti-inflammatory drugs.</title>
        <authorList>
            <person name="Pawlowski J."/>
            <person name="Huizinga M."/>
            <person name="Penning T.M."/>
        </authorList>
    </citation>
    <scope>NUCLEOTIDE SEQUENCE [MRNA] OF 112-169 AND 238-322</scope>
</reference>
<reference key="9">
    <citation type="journal article" date="1991" name="J. Biol. Chem.">
        <title>Affinity labeling of 3 alpha-hydroxysteroid dehydrogenase with 3 alpha-bromoacetoxyandrosterone and 11 alpha-bromoacetoxyprogesterone. Isolation and sequence of active site peptides containing reactive cysteines; sequence confirmation using nucleotide sequence from a cDNA clone.</title>
        <authorList>
            <person name="Penning T.M."/>
            <person name="Abrams W.R."/>
            <person name="Pawlowski J.E."/>
        </authorList>
    </citation>
    <scope>PROTEIN SEQUENCE OF 162-171; 208-223 AND 232-246</scope>
</reference>
<reference key="10">
    <citation type="journal article" date="1995" name="J. Steroid Biochem. Mol. Biol.">
        <title>Distribution of 3 alpha-hydroxysteroid dehydrogenase in rat brain and molecular cloning of multiple cDNAs encoding structurally related proteins in humans.</title>
        <authorList>
            <person name="Khanna M."/>
            <person name="Qin K.-N."/>
            <person name="Cheng K.-C."/>
        </authorList>
    </citation>
    <scope>TISSUE SPECIFICITY</scope>
    <source>
        <tissue>Brain</tissue>
    </source>
</reference>
<reference key="11">
    <citation type="journal article" date="1994" name="Proc. Natl. Acad. Sci. U.S.A.">
        <title>Three-dimensional structure of rat liver 3 alpha-hydroxysteroid/dihydrodiol dehydrogenase: a member of the aldo-keto reductase superfamily.</title>
        <authorList>
            <person name="Hoog S.S."/>
            <person name="Pawlowski J.E."/>
            <person name="Alzari P.M."/>
            <person name="Penning T.M."/>
            <person name="Lewis M."/>
        </authorList>
    </citation>
    <scope>X-RAY CRYSTALLOGRAPHY (3.0 ANGSTROMS)</scope>
    <source>
        <tissue>Liver</tissue>
    </source>
</reference>
<reference key="12">
    <citation type="journal article" date="1996" name="Biochemistry">
        <title>Structure of 3 alpha-hydroxysteroid/dihydrodiol dehydrogenase complexed with NADP+.</title>
        <authorList>
            <person name="Bennett M.J."/>
            <person name="Schlegel B.P."/>
            <person name="Jez J.M."/>
            <person name="Penning T.M."/>
            <person name="Lewis M."/>
        </authorList>
    </citation>
    <scope>X-RAY CRYSTALLOGRAPHY (2.7 ANGSTROMS)</scope>
</reference>
<reference key="13">
    <citation type="journal article" date="1997" name="Structure">
        <title>Steroid recognition and regulation of hormone action: crystal structure of testosterone and NADP+ bound to 3 alpha-hydroxysteroid/dihydrodiol dehydrogenase.</title>
        <authorList>
            <person name="Bennett M.J."/>
            <person name="Albert R.H."/>
            <person name="Jez J.M."/>
            <person name="Ma H."/>
            <person name="Penning T.M."/>
            <person name="Lewis M."/>
        </authorList>
    </citation>
    <scope>X-RAY CRYSTALLOGRAPHY (2.50 ANGSTROMS) IN COMPLEX WITH NADP AND TESTOSTERONE</scope>
</reference>
<keyword id="KW-0002">3D-structure</keyword>
<keyword id="KW-0963">Cytoplasm</keyword>
<keyword id="KW-0903">Direct protein sequencing</keyword>
<keyword id="KW-0520">NAD</keyword>
<keyword id="KW-0521">NADP</keyword>
<keyword id="KW-0560">Oxidoreductase</keyword>
<keyword id="KW-1185">Reference proteome</keyword>
<organism>
    <name type="scientific">Rattus norvegicus</name>
    <name type="common">Rat</name>
    <dbReference type="NCBI Taxonomy" id="10116"/>
    <lineage>
        <taxon>Eukaryota</taxon>
        <taxon>Metazoa</taxon>
        <taxon>Chordata</taxon>
        <taxon>Craniata</taxon>
        <taxon>Vertebrata</taxon>
        <taxon>Euteleostomi</taxon>
        <taxon>Mammalia</taxon>
        <taxon>Eutheria</taxon>
        <taxon>Euarchontoglires</taxon>
        <taxon>Glires</taxon>
        <taxon>Rodentia</taxon>
        <taxon>Myomorpha</taxon>
        <taxon>Muroidea</taxon>
        <taxon>Muridae</taxon>
        <taxon>Murinae</taxon>
        <taxon>Rattus</taxon>
    </lineage>
</organism>
<sequence>MDSISLRVALNDGNFIPVLGFGTTVPEKVAKDEVIKATKIAIDNGFRHFDSAYLYEVEEEVGQAIRSKIEDGTVKREDIFYTSKLWSTFHRPELVRTCLEKTLKSTQLDYVDLYIIHFPMALQPGDIFFPRDEHGKLLFETVDICDTWEAMEKCKDAGLAKSIGVSNFNCRQLERILNKPGLKYKPVCNQVECHLYLNQSKMLDYCKSKDIILVSYCTLGSSRDKTWVDQKSPVLLDDPVLCAIAKKYKQTPALVALRYQLQRGVVPLIRSFNAKRIKELTQVFEFQLASEDMKALDGLNRNFRYNNAKYFDDHPNHPFTDE</sequence>
<dbReference type="EC" id="1.1.1.50"/>
<dbReference type="EMBL" id="M64393">
    <property type="protein sequence ID" value="AAA40605.1"/>
    <property type="molecule type" value="mRNA"/>
</dbReference>
<dbReference type="EMBL" id="M61937">
    <property type="protein sequence ID" value="AAA41077.1"/>
    <property type="molecule type" value="mRNA"/>
</dbReference>
<dbReference type="EMBL" id="D17310">
    <property type="protein sequence ID" value="BAA04132.1"/>
    <property type="molecule type" value="mRNA"/>
</dbReference>
<dbReference type="EMBL" id="S57790">
    <property type="protein sequence ID" value="AAB19918.1"/>
    <property type="molecule type" value="mRNA"/>
</dbReference>
<dbReference type="EMBL" id="AF180334">
    <property type="protein sequence ID" value="AAF25813.1"/>
    <property type="molecule type" value="Genomic_DNA"/>
</dbReference>
<dbReference type="EMBL" id="AF180326">
    <property type="protein sequence ID" value="AAF25813.1"/>
    <property type="status" value="JOINED"/>
    <property type="molecule type" value="Genomic_DNA"/>
</dbReference>
<dbReference type="EMBL" id="AF180327">
    <property type="protein sequence ID" value="AAF25813.1"/>
    <property type="status" value="JOINED"/>
    <property type="molecule type" value="Genomic_DNA"/>
</dbReference>
<dbReference type="EMBL" id="AF180328">
    <property type="protein sequence ID" value="AAF25813.1"/>
    <property type="status" value="JOINED"/>
    <property type="molecule type" value="Genomic_DNA"/>
</dbReference>
<dbReference type="EMBL" id="AF180329">
    <property type="protein sequence ID" value="AAF25813.1"/>
    <property type="status" value="JOINED"/>
    <property type="molecule type" value="Genomic_DNA"/>
</dbReference>
<dbReference type="EMBL" id="AF180330">
    <property type="protein sequence ID" value="AAF25813.1"/>
    <property type="status" value="JOINED"/>
    <property type="molecule type" value="Genomic_DNA"/>
</dbReference>
<dbReference type="EMBL" id="AF180331">
    <property type="protein sequence ID" value="AAF25813.1"/>
    <property type="status" value="JOINED"/>
    <property type="molecule type" value="Genomic_DNA"/>
</dbReference>
<dbReference type="EMBL" id="AF180332">
    <property type="protein sequence ID" value="AAF25813.1"/>
    <property type="status" value="JOINED"/>
    <property type="molecule type" value="Genomic_DNA"/>
</dbReference>
<dbReference type="EMBL" id="AF180333">
    <property type="protein sequence ID" value="AAF25813.1"/>
    <property type="status" value="JOINED"/>
    <property type="molecule type" value="Genomic_DNA"/>
</dbReference>
<dbReference type="EMBL" id="BC091123">
    <property type="protein sequence ID" value="AAH91123.1"/>
    <property type="molecule type" value="mRNA"/>
</dbReference>
<dbReference type="EMBL" id="S35751">
    <property type="protein sequence ID" value="AAB21512.1"/>
    <property type="molecule type" value="mRNA"/>
</dbReference>
<dbReference type="EMBL" id="S35752">
    <property type="protein sequence ID" value="AAB21513.1"/>
    <property type="molecule type" value="mRNA"/>
</dbReference>
<dbReference type="PIR" id="A39350">
    <property type="entry name" value="A39350"/>
</dbReference>
<dbReference type="PIR" id="PC2175">
    <property type="entry name" value="PC2175"/>
</dbReference>
<dbReference type="RefSeq" id="NP_612556.1">
    <property type="nucleotide sequence ID" value="NM_138547.3"/>
</dbReference>
<dbReference type="PDB" id="1AFS">
    <property type="method" value="X-ray"/>
    <property type="resolution" value="2.50 A"/>
    <property type="chains" value="A/B=1-322"/>
</dbReference>
<dbReference type="PDB" id="1LWI">
    <property type="method" value="X-ray"/>
    <property type="resolution" value="2.70 A"/>
    <property type="chains" value="A/B=1-322"/>
</dbReference>
<dbReference type="PDB" id="1RAL">
    <property type="method" value="X-ray"/>
    <property type="resolution" value="3.00 A"/>
    <property type="chains" value="A=1-308"/>
</dbReference>
<dbReference type="PDBsum" id="1AFS"/>
<dbReference type="PDBsum" id="1LWI"/>
<dbReference type="PDBsum" id="1RAL"/>
<dbReference type="SMR" id="P23457"/>
<dbReference type="FunCoup" id="P23457">
    <property type="interactions" value="53"/>
</dbReference>
<dbReference type="STRING" id="10116.ENSRNOP00000023835"/>
<dbReference type="ChEMBL" id="CHEMBL1075221"/>
<dbReference type="iPTMnet" id="P23457"/>
<dbReference type="PhosphoSitePlus" id="P23457"/>
<dbReference type="PaxDb" id="10116-ENSRNOP00000023835"/>
<dbReference type="Ensembl" id="ENSRNOT00000023835.7">
    <property type="protein sequence ID" value="ENSRNOP00000023835.4"/>
    <property type="gene ID" value="ENSRNOG00000017672.8"/>
</dbReference>
<dbReference type="GeneID" id="191574"/>
<dbReference type="KEGG" id="rno:191574"/>
<dbReference type="UCSC" id="RGD:708361">
    <property type="organism name" value="rat"/>
</dbReference>
<dbReference type="AGR" id="RGD:708361"/>
<dbReference type="CTD" id="105387"/>
<dbReference type="RGD" id="708361">
    <property type="gene designation" value="LOC191574"/>
</dbReference>
<dbReference type="eggNOG" id="KOG1577">
    <property type="taxonomic scope" value="Eukaryota"/>
</dbReference>
<dbReference type="GeneTree" id="ENSGT00940000153677"/>
<dbReference type="HOGENOM" id="CLU_023205_0_0_1"/>
<dbReference type="InParanoid" id="P23457"/>
<dbReference type="OMA" id="ELIMISW"/>
<dbReference type="OrthoDB" id="416253at2759"/>
<dbReference type="PhylomeDB" id="P23457"/>
<dbReference type="TreeFam" id="TF106492"/>
<dbReference type="BioCyc" id="MetaCyc:MONOMER-14305"/>
<dbReference type="BRENDA" id="1.1.1.213">
    <property type="organism ID" value="5301"/>
</dbReference>
<dbReference type="BRENDA" id="1.1.1.50">
    <property type="organism ID" value="5301"/>
</dbReference>
<dbReference type="BRENDA" id="1.6.5.10">
    <property type="organism ID" value="5301"/>
</dbReference>
<dbReference type="SABIO-RK" id="P23457"/>
<dbReference type="EvolutionaryTrace" id="P23457"/>
<dbReference type="PRO" id="PR:P23457"/>
<dbReference type="Proteomes" id="UP000002494">
    <property type="component" value="Chromosome 17"/>
</dbReference>
<dbReference type="Bgee" id="ENSRNOG00000017672">
    <property type="expression patterns" value="Expressed in liver and 19 other cell types or tissues"/>
</dbReference>
<dbReference type="GO" id="GO:0005829">
    <property type="term" value="C:cytosol"/>
    <property type="evidence" value="ECO:0000318"/>
    <property type="project" value="GO_Central"/>
</dbReference>
<dbReference type="GO" id="GO:0004032">
    <property type="term" value="F:aldose reductase (NADPH) activity"/>
    <property type="evidence" value="ECO:0000318"/>
    <property type="project" value="GO_Central"/>
</dbReference>
<dbReference type="GO" id="GO:0047042">
    <property type="term" value="F:androsterone dehydrogenase (B-specific) activity"/>
    <property type="evidence" value="ECO:0007669"/>
    <property type="project" value="UniProtKB-EC"/>
</dbReference>
<dbReference type="GO" id="GO:0047023">
    <property type="term" value="F:androsterone dehydrogenase [NAD(P)+] activity"/>
    <property type="evidence" value="ECO:0000318"/>
    <property type="project" value="GO_Central"/>
</dbReference>
<dbReference type="GO" id="GO:0032052">
    <property type="term" value="F:bile acid binding"/>
    <property type="evidence" value="ECO:0000318"/>
    <property type="project" value="GO_Central"/>
</dbReference>
<dbReference type="GO" id="GO:0047086">
    <property type="term" value="F:ketosteroid monooxygenase activity"/>
    <property type="evidence" value="ECO:0000318"/>
    <property type="project" value="GO_Central"/>
</dbReference>
<dbReference type="GO" id="GO:0016229">
    <property type="term" value="F:steroid dehydrogenase activity"/>
    <property type="evidence" value="ECO:0000314"/>
    <property type="project" value="RGD"/>
</dbReference>
<dbReference type="GO" id="GO:0044597">
    <property type="term" value="P:daunorubicin metabolic process"/>
    <property type="evidence" value="ECO:0000318"/>
    <property type="project" value="GO_Central"/>
</dbReference>
<dbReference type="GO" id="GO:0044598">
    <property type="term" value="P:doxorubicin metabolic process"/>
    <property type="evidence" value="ECO:0000318"/>
    <property type="project" value="GO_Central"/>
</dbReference>
<dbReference type="GO" id="GO:0021766">
    <property type="term" value="P:hippocampus development"/>
    <property type="evidence" value="ECO:0000270"/>
    <property type="project" value="RGD"/>
</dbReference>
<dbReference type="GO" id="GO:0042448">
    <property type="term" value="P:progesterone metabolic process"/>
    <property type="evidence" value="ECO:0000318"/>
    <property type="project" value="GO_Central"/>
</dbReference>
<dbReference type="GO" id="GO:0006693">
    <property type="term" value="P:prostaglandin metabolic process"/>
    <property type="evidence" value="ECO:0000318"/>
    <property type="project" value="GO_Central"/>
</dbReference>
<dbReference type="GO" id="GO:0008202">
    <property type="term" value="P:steroid metabolic process"/>
    <property type="evidence" value="ECO:0000304"/>
    <property type="project" value="RGD"/>
</dbReference>
<dbReference type="CDD" id="cd19108">
    <property type="entry name" value="AKR_AKR1C1-35"/>
    <property type="match status" value="1"/>
</dbReference>
<dbReference type="DisProt" id="DP02646"/>
<dbReference type="FunFam" id="3.20.20.100:FF:000003">
    <property type="entry name" value="Aldo-keto reductase family 1 member C3"/>
    <property type="match status" value="1"/>
</dbReference>
<dbReference type="Gene3D" id="3.20.20.100">
    <property type="entry name" value="NADP-dependent oxidoreductase domain"/>
    <property type="match status" value="1"/>
</dbReference>
<dbReference type="InterPro" id="IPR020471">
    <property type="entry name" value="AKR"/>
</dbReference>
<dbReference type="InterPro" id="IPR044482">
    <property type="entry name" value="AKR1C"/>
</dbReference>
<dbReference type="InterPro" id="IPR018170">
    <property type="entry name" value="Aldo/ket_reductase_CS"/>
</dbReference>
<dbReference type="InterPro" id="IPR023210">
    <property type="entry name" value="NADP_OxRdtase_dom"/>
</dbReference>
<dbReference type="InterPro" id="IPR036812">
    <property type="entry name" value="NADP_OxRdtase_dom_sf"/>
</dbReference>
<dbReference type="PANTHER" id="PTHR11732">
    <property type="entry name" value="ALDO/KETO REDUCTASE"/>
    <property type="match status" value="1"/>
</dbReference>
<dbReference type="Pfam" id="PF00248">
    <property type="entry name" value="Aldo_ket_red"/>
    <property type="match status" value="1"/>
</dbReference>
<dbReference type="PIRSF" id="PIRSF000097">
    <property type="entry name" value="AKR"/>
    <property type="match status" value="1"/>
</dbReference>
<dbReference type="PRINTS" id="PR00069">
    <property type="entry name" value="ALDKETRDTASE"/>
</dbReference>
<dbReference type="SUPFAM" id="SSF51430">
    <property type="entry name" value="NAD(P)-linked oxidoreductase"/>
    <property type="match status" value="1"/>
</dbReference>
<dbReference type="PROSITE" id="PS00798">
    <property type="entry name" value="ALDOKETO_REDUCTASE_1"/>
    <property type="match status" value="1"/>
</dbReference>
<dbReference type="PROSITE" id="PS00062">
    <property type="entry name" value="ALDOKETO_REDUCTASE_2"/>
    <property type="match status" value="1"/>
</dbReference>
<dbReference type="PROSITE" id="PS00063">
    <property type="entry name" value="ALDOKETO_REDUCTASE_3"/>
    <property type="match status" value="1"/>
</dbReference>
<evidence type="ECO:0000250" key="1"/>
<evidence type="ECO:0000269" key="2">
    <source>
    </source>
</evidence>
<evidence type="ECO:0000269" key="3">
    <source>
    </source>
</evidence>
<evidence type="ECO:0000305" key="4"/>
<evidence type="ECO:0007829" key="5">
    <source>
        <dbReference type="PDB" id="1AFS"/>
    </source>
</evidence>
<evidence type="ECO:0007829" key="6">
    <source>
        <dbReference type="PDB" id="1RAL"/>
    </source>
</evidence>
<proteinExistence type="evidence at protein level"/>